<accession>P43848</accession>
<comment type="catalytic activity">
    <reaction>
        <text>2-formamido-N(1)-(5-O-phospho-beta-D-ribosyl)acetamidine + ATP = 5-amino-1-(5-phospho-beta-D-ribosyl)imidazole + ADP + phosphate + H(+)</text>
        <dbReference type="Rhea" id="RHEA:23032"/>
        <dbReference type="ChEBI" id="CHEBI:15378"/>
        <dbReference type="ChEBI" id="CHEBI:30616"/>
        <dbReference type="ChEBI" id="CHEBI:43474"/>
        <dbReference type="ChEBI" id="CHEBI:137981"/>
        <dbReference type="ChEBI" id="CHEBI:147287"/>
        <dbReference type="ChEBI" id="CHEBI:456216"/>
        <dbReference type="EC" id="6.3.3.1"/>
    </reaction>
</comment>
<comment type="pathway">
    <text>Purine metabolism; IMP biosynthesis via de novo pathway; 5-amino-1-(5-phospho-D-ribosyl)imidazole from N(2)-formyl-N(1)-(5-phospho-D-ribosyl)glycinamide: step 2/2.</text>
</comment>
<comment type="subcellular location">
    <subcellularLocation>
        <location evidence="1">Cytoplasm</location>
    </subcellularLocation>
</comment>
<comment type="similarity">
    <text evidence="2">Belongs to the AIR synthase family.</text>
</comment>
<keyword id="KW-0067">ATP-binding</keyword>
<keyword id="KW-0963">Cytoplasm</keyword>
<keyword id="KW-0436">Ligase</keyword>
<keyword id="KW-0547">Nucleotide-binding</keyword>
<keyword id="KW-0658">Purine biosynthesis</keyword>
<keyword id="KW-1185">Reference proteome</keyword>
<evidence type="ECO:0000250" key="1"/>
<evidence type="ECO:0000305" key="2"/>
<name>PUR5_HAEIN</name>
<proteinExistence type="inferred from homology"/>
<protein>
    <recommendedName>
        <fullName>Phosphoribosylformylglycinamidine cyclo-ligase</fullName>
        <ecNumber>6.3.3.1</ecNumber>
    </recommendedName>
    <alternativeName>
        <fullName>AIR synthase</fullName>
    </alternativeName>
    <alternativeName>
        <fullName>AIRS</fullName>
    </alternativeName>
    <alternativeName>
        <fullName>Phosphoribosyl-aminoimidazole synthetase</fullName>
    </alternativeName>
</protein>
<organism>
    <name type="scientific">Haemophilus influenzae (strain ATCC 51907 / DSM 11121 / KW20 / Rd)</name>
    <dbReference type="NCBI Taxonomy" id="71421"/>
    <lineage>
        <taxon>Bacteria</taxon>
        <taxon>Pseudomonadati</taxon>
        <taxon>Pseudomonadota</taxon>
        <taxon>Gammaproteobacteria</taxon>
        <taxon>Pasteurellales</taxon>
        <taxon>Pasteurellaceae</taxon>
        <taxon>Haemophilus</taxon>
    </lineage>
</organism>
<feature type="chain" id="PRO_0000148215" description="Phosphoribosylformylglycinamidine cyclo-ligase">
    <location>
        <begin position="1"/>
        <end position="344"/>
    </location>
</feature>
<reference key="1">
    <citation type="journal article" date="1995" name="Science">
        <title>Whole-genome random sequencing and assembly of Haemophilus influenzae Rd.</title>
        <authorList>
            <person name="Fleischmann R.D."/>
            <person name="Adams M.D."/>
            <person name="White O."/>
            <person name="Clayton R.A."/>
            <person name="Kirkness E.F."/>
            <person name="Kerlavage A.R."/>
            <person name="Bult C.J."/>
            <person name="Tomb J.-F."/>
            <person name="Dougherty B.A."/>
            <person name="Merrick J.M."/>
            <person name="McKenney K."/>
            <person name="Sutton G.G."/>
            <person name="FitzHugh W."/>
            <person name="Fields C.A."/>
            <person name="Gocayne J.D."/>
            <person name="Scott J.D."/>
            <person name="Shirley R."/>
            <person name="Liu L.-I."/>
            <person name="Glodek A."/>
            <person name="Kelley J.M."/>
            <person name="Weidman J.F."/>
            <person name="Phillips C.A."/>
            <person name="Spriggs T."/>
            <person name="Hedblom E."/>
            <person name="Cotton M.D."/>
            <person name="Utterback T.R."/>
            <person name="Hanna M.C."/>
            <person name="Nguyen D.T."/>
            <person name="Saudek D.M."/>
            <person name="Brandon R.C."/>
            <person name="Fine L.D."/>
            <person name="Fritchman J.L."/>
            <person name="Fuhrmann J.L."/>
            <person name="Geoghagen N.S.M."/>
            <person name="Gnehm C.L."/>
            <person name="McDonald L.A."/>
            <person name="Small K.V."/>
            <person name="Fraser C.M."/>
            <person name="Smith H.O."/>
            <person name="Venter J.C."/>
        </authorList>
    </citation>
    <scope>NUCLEOTIDE SEQUENCE [LARGE SCALE GENOMIC DNA]</scope>
    <source>
        <strain>ATCC 51907 / DSM 11121 / KW20 / Rd</strain>
    </source>
</reference>
<gene>
    <name type="primary">purM</name>
    <name type="ordered locus">HI_1429</name>
</gene>
<sequence>MSNTQLSYKDAGVDIHTGNELVERIKGDVKRTRRSEVMGGLGGFGALCALPTKYKEPILVSGTDGVGTKLRLAIDLKKHDTIGQDLVAMCVNDLIVQGAEPLFFLDYYATGKLDVDVAASVIKGIADGCEMSGCALVGGETAEMPGMYHEGDYDLAGFCVGVVEKSEIIDGTAVKTGDTLIALGSSGAHSNGYSLIRKVLEVSGANPTDLLEGKPLSEHLLAPTKIYVKSILQLIKQTEVHAIAHLTGGGFWENIPRVLPDNTKAVIDESSWQWPAIFNWLQEKGNISRYEMYRTFNCGVGMVIALPEKEVETALALLEQSGEKAWVIGKIEHLGESEAQVEIQ</sequence>
<dbReference type="EC" id="6.3.3.1"/>
<dbReference type="EMBL" id="L42023">
    <property type="protein sequence ID" value="AAC23076.1"/>
    <property type="molecule type" value="Genomic_DNA"/>
</dbReference>
<dbReference type="PIR" id="G64122">
    <property type="entry name" value="G64122"/>
</dbReference>
<dbReference type="RefSeq" id="NP_439578.1">
    <property type="nucleotide sequence ID" value="NC_000907.1"/>
</dbReference>
<dbReference type="SMR" id="P43848"/>
<dbReference type="STRING" id="71421.HI_1429"/>
<dbReference type="EnsemblBacteria" id="AAC23076">
    <property type="protein sequence ID" value="AAC23076"/>
    <property type="gene ID" value="HI_1429"/>
</dbReference>
<dbReference type="KEGG" id="hin:HI_1429"/>
<dbReference type="PATRIC" id="fig|71421.8.peg.1486"/>
<dbReference type="eggNOG" id="COG0150">
    <property type="taxonomic scope" value="Bacteria"/>
</dbReference>
<dbReference type="HOGENOM" id="CLU_047116_0_0_6"/>
<dbReference type="OrthoDB" id="9777881at2"/>
<dbReference type="PhylomeDB" id="P43848"/>
<dbReference type="BioCyc" id="HINF71421:G1GJ1-1452-MONOMER"/>
<dbReference type="UniPathway" id="UPA00074">
    <property type="reaction ID" value="UER00129"/>
</dbReference>
<dbReference type="Proteomes" id="UP000000579">
    <property type="component" value="Chromosome"/>
</dbReference>
<dbReference type="GO" id="GO:0005829">
    <property type="term" value="C:cytosol"/>
    <property type="evidence" value="ECO:0000318"/>
    <property type="project" value="GO_Central"/>
</dbReference>
<dbReference type="GO" id="GO:0005524">
    <property type="term" value="F:ATP binding"/>
    <property type="evidence" value="ECO:0007669"/>
    <property type="project" value="UniProtKB-KW"/>
</dbReference>
<dbReference type="GO" id="GO:0004637">
    <property type="term" value="F:phosphoribosylamine-glycine ligase activity"/>
    <property type="evidence" value="ECO:0000318"/>
    <property type="project" value="GO_Central"/>
</dbReference>
<dbReference type="GO" id="GO:0004641">
    <property type="term" value="F:phosphoribosylformylglycinamidine cyclo-ligase activity"/>
    <property type="evidence" value="ECO:0000318"/>
    <property type="project" value="GO_Central"/>
</dbReference>
<dbReference type="GO" id="GO:0006189">
    <property type="term" value="P:'de novo' IMP biosynthetic process"/>
    <property type="evidence" value="ECO:0007669"/>
    <property type="project" value="UniProtKB-UniRule"/>
</dbReference>
<dbReference type="GO" id="GO:0046084">
    <property type="term" value="P:adenine biosynthetic process"/>
    <property type="evidence" value="ECO:0000318"/>
    <property type="project" value="GO_Central"/>
</dbReference>
<dbReference type="GO" id="GO:0006164">
    <property type="term" value="P:purine nucleotide biosynthetic process"/>
    <property type="evidence" value="ECO:0000318"/>
    <property type="project" value="GO_Central"/>
</dbReference>
<dbReference type="CDD" id="cd02196">
    <property type="entry name" value="PurM"/>
    <property type="match status" value="1"/>
</dbReference>
<dbReference type="FunFam" id="3.30.1330.10:FF:000001">
    <property type="entry name" value="Phosphoribosylformylglycinamidine cyclo-ligase"/>
    <property type="match status" value="1"/>
</dbReference>
<dbReference type="FunFam" id="3.90.650.10:FF:000001">
    <property type="entry name" value="Phosphoribosylformylglycinamidine cyclo-ligase"/>
    <property type="match status" value="1"/>
</dbReference>
<dbReference type="Gene3D" id="3.90.650.10">
    <property type="entry name" value="PurM-like C-terminal domain"/>
    <property type="match status" value="1"/>
</dbReference>
<dbReference type="Gene3D" id="3.30.1330.10">
    <property type="entry name" value="PurM-like, N-terminal domain"/>
    <property type="match status" value="1"/>
</dbReference>
<dbReference type="HAMAP" id="MF_00741">
    <property type="entry name" value="AIRS"/>
    <property type="match status" value="1"/>
</dbReference>
<dbReference type="InterPro" id="IPR010918">
    <property type="entry name" value="PurM-like_C_dom"/>
</dbReference>
<dbReference type="InterPro" id="IPR036676">
    <property type="entry name" value="PurM-like_C_sf"/>
</dbReference>
<dbReference type="InterPro" id="IPR016188">
    <property type="entry name" value="PurM-like_N"/>
</dbReference>
<dbReference type="InterPro" id="IPR036921">
    <property type="entry name" value="PurM-like_N_sf"/>
</dbReference>
<dbReference type="InterPro" id="IPR004733">
    <property type="entry name" value="PurM_cligase"/>
</dbReference>
<dbReference type="NCBIfam" id="TIGR00878">
    <property type="entry name" value="purM"/>
    <property type="match status" value="1"/>
</dbReference>
<dbReference type="PANTHER" id="PTHR10520:SF12">
    <property type="entry name" value="TRIFUNCTIONAL PURINE BIOSYNTHETIC PROTEIN ADENOSINE-3"/>
    <property type="match status" value="1"/>
</dbReference>
<dbReference type="PANTHER" id="PTHR10520">
    <property type="entry name" value="TRIFUNCTIONAL PURINE BIOSYNTHETIC PROTEIN ADENOSINE-3-RELATED"/>
    <property type="match status" value="1"/>
</dbReference>
<dbReference type="Pfam" id="PF00586">
    <property type="entry name" value="AIRS"/>
    <property type="match status" value="1"/>
</dbReference>
<dbReference type="Pfam" id="PF02769">
    <property type="entry name" value="AIRS_C"/>
    <property type="match status" value="1"/>
</dbReference>
<dbReference type="SUPFAM" id="SSF56042">
    <property type="entry name" value="PurM C-terminal domain-like"/>
    <property type="match status" value="1"/>
</dbReference>
<dbReference type="SUPFAM" id="SSF55326">
    <property type="entry name" value="PurM N-terminal domain-like"/>
    <property type="match status" value="1"/>
</dbReference>